<comment type="function">
    <text evidence="1">Phosphorylation of dTMP to form dTDP in both de novo and salvage pathways of dTTP synthesis.</text>
</comment>
<comment type="catalytic activity">
    <reaction evidence="1">
        <text>dTMP + ATP = dTDP + ADP</text>
        <dbReference type="Rhea" id="RHEA:13517"/>
        <dbReference type="ChEBI" id="CHEBI:30616"/>
        <dbReference type="ChEBI" id="CHEBI:58369"/>
        <dbReference type="ChEBI" id="CHEBI:63528"/>
        <dbReference type="ChEBI" id="CHEBI:456216"/>
        <dbReference type="EC" id="2.7.4.9"/>
    </reaction>
</comment>
<comment type="similarity">
    <text evidence="1">Belongs to the thymidylate kinase family.</text>
</comment>
<protein>
    <recommendedName>
        <fullName evidence="1">Thymidylate kinase</fullName>
        <ecNumber evidence="1">2.7.4.9</ecNumber>
    </recommendedName>
    <alternativeName>
        <fullName evidence="1">dTMP kinase</fullName>
    </alternativeName>
</protein>
<sequence length="211" mass="22884">MTGVFITLEGGDGVGKSTQSALLRGWLEDEGHEVVVTREPGGSELGVEIREIVLHRRGHIAPRAEALLYAADRAHHVETVVRPALDRGAVVLQDRYLDSSVAYQGAGRVLDAGEIRELSLWAAQGLLPDLTVLLDLDQAAARVRLDAARTRFDRLESERADFHERVRQAFLGLAGAEPERFLVVDAARPREEIAAAIRTRAQALIAAGASA</sequence>
<keyword id="KW-0067">ATP-binding</keyword>
<keyword id="KW-0418">Kinase</keyword>
<keyword id="KW-0545">Nucleotide biosynthesis</keyword>
<keyword id="KW-0547">Nucleotide-binding</keyword>
<keyword id="KW-0808">Transferase</keyword>
<dbReference type="EC" id="2.7.4.9" evidence="1"/>
<dbReference type="EMBL" id="AM711867">
    <property type="protein sequence ID" value="CAN00966.1"/>
    <property type="molecule type" value="Genomic_DNA"/>
</dbReference>
<dbReference type="RefSeq" id="WP_012037614.1">
    <property type="nucleotide sequence ID" value="NC_009480.1"/>
</dbReference>
<dbReference type="SMR" id="A5CPG8"/>
<dbReference type="KEGG" id="cmi:CMM_0928"/>
<dbReference type="eggNOG" id="COG0125">
    <property type="taxonomic scope" value="Bacteria"/>
</dbReference>
<dbReference type="HOGENOM" id="CLU_049131_0_2_11"/>
<dbReference type="OrthoDB" id="9774907at2"/>
<dbReference type="Proteomes" id="UP000001564">
    <property type="component" value="Chromosome"/>
</dbReference>
<dbReference type="GO" id="GO:0005829">
    <property type="term" value="C:cytosol"/>
    <property type="evidence" value="ECO:0007669"/>
    <property type="project" value="TreeGrafter"/>
</dbReference>
<dbReference type="GO" id="GO:0005524">
    <property type="term" value="F:ATP binding"/>
    <property type="evidence" value="ECO:0007669"/>
    <property type="project" value="UniProtKB-UniRule"/>
</dbReference>
<dbReference type="GO" id="GO:0004798">
    <property type="term" value="F:dTMP kinase activity"/>
    <property type="evidence" value="ECO:0007669"/>
    <property type="project" value="UniProtKB-UniRule"/>
</dbReference>
<dbReference type="GO" id="GO:0006233">
    <property type="term" value="P:dTDP biosynthetic process"/>
    <property type="evidence" value="ECO:0007669"/>
    <property type="project" value="InterPro"/>
</dbReference>
<dbReference type="GO" id="GO:0006235">
    <property type="term" value="P:dTTP biosynthetic process"/>
    <property type="evidence" value="ECO:0007669"/>
    <property type="project" value="UniProtKB-UniRule"/>
</dbReference>
<dbReference type="GO" id="GO:0006227">
    <property type="term" value="P:dUDP biosynthetic process"/>
    <property type="evidence" value="ECO:0007669"/>
    <property type="project" value="TreeGrafter"/>
</dbReference>
<dbReference type="CDD" id="cd01672">
    <property type="entry name" value="TMPK"/>
    <property type="match status" value="1"/>
</dbReference>
<dbReference type="FunFam" id="3.40.50.300:FF:000225">
    <property type="entry name" value="Thymidylate kinase"/>
    <property type="match status" value="1"/>
</dbReference>
<dbReference type="Gene3D" id="3.40.50.300">
    <property type="entry name" value="P-loop containing nucleotide triphosphate hydrolases"/>
    <property type="match status" value="1"/>
</dbReference>
<dbReference type="HAMAP" id="MF_00165">
    <property type="entry name" value="Thymidylate_kinase"/>
    <property type="match status" value="1"/>
</dbReference>
<dbReference type="InterPro" id="IPR027417">
    <property type="entry name" value="P-loop_NTPase"/>
</dbReference>
<dbReference type="InterPro" id="IPR039430">
    <property type="entry name" value="Thymidylate_kin-like_dom"/>
</dbReference>
<dbReference type="InterPro" id="IPR018094">
    <property type="entry name" value="Thymidylate_kinase"/>
</dbReference>
<dbReference type="NCBIfam" id="TIGR00041">
    <property type="entry name" value="DTMP_kinase"/>
    <property type="match status" value="1"/>
</dbReference>
<dbReference type="PANTHER" id="PTHR10344">
    <property type="entry name" value="THYMIDYLATE KINASE"/>
    <property type="match status" value="1"/>
</dbReference>
<dbReference type="PANTHER" id="PTHR10344:SF4">
    <property type="entry name" value="UMP-CMP KINASE 2, MITOCHONDRIAL"/>
    <property type="match status" value="1"/>
</dbReference>
<dbReference type="Pfam" id="PF02223">
    <property type="entry name" value="Thymidylate_kin"/>
    <property type="match status" value="1"/>
</dbReference>
<dbReference type="SUPFAM" id="SSF52540">
    <property type="entry name" value="P-loop containing nucleoside triphosphate hydrolases"/>
    <property type="match status" value="1"/>
</dbReference>
<organism>
    <name type="scientific">Clavibacter michiganensis subsp. michiganensis (strain NCPPB 382)</name>
    <dbReference type="NCBI Taxonomy" id="443906"/>
    <lineage>
        <taxon>Bacteria</taxon>
        <taxon>Bacillati</taxon>
        <taxon>Actinomycetota</taxon>
        <taxon>Actinomycetes</taxon>
        <taxon>Micrococcales</taxon>
        <taxon>Microbacteriaceae</taxon>
        <taxon>Clavibacter</taxon>
    </lineage>
</organism>
<accession>A5CPG8</accession>
<evidence type="ECO:0000255" key="1">
    <source>
        <dbReference type="HAMAP-Rule" id="MF_00165"/>
    </source>
</evidence>
<feature type="chain" id="PRO_1000023179" description="Thymidylate kinase">
    <location>
        <begin position="1"/>
        <end position="211"/>
    </location>
</feature>
<feature type="binding site" evidence="1">
    <location>
        <begin position="10"/>
        <end position="17"/>
    </location>
    <ligand>
        <name>ATP</name>
        <dbReference type="ChEBI" id="CHEBI:30616"/>
    </ligand>
</feature>
<gene>
    <name evidence="1" type="primary">tmk</name>
    <name type="ordered locus">CMM_0928</name>
</gene>
<proteinExistence type="inferred from homology"/>
<name>KTHY_CLAM3</name>
<reference key="1">
    <citation type="journal article" date="2008" name="J. Bacteriol.">
        <title>The genome sequence of the tomato-pathogenic actinomycete Clavibacter michiganensis subsp. michiganensis NCPPB382 reveals a large island involved in pathogenicity.</title>
        <authorList>
            <person name="Gartemann K.-H."/>
            <person name="Abt B."/>
            <person name="Bekel T."/>
            <person name="Burger A."/>
            <person name="Engemann J."/>
            <person name="Fluegel M."/>
            <person name="Gaigalat L."/>
            <person name="Goesmann A."/>
            <person name="Graefen I."/>
            <person name="Kalinowski J."/>
            <person name="Kaup O."/>
            <person name="Kirchner O."/>
            <person name="Krause L."/>
            <person name="Linke B."/>
            <person name="McHardy A."/>
            <person name="Meyer F."/>
            <person name="Pohle S."/>
            <person name="Rueckert C."/>
            <person name="Schneiker S."/>
            <person name="Zellermann E.-M."/>
            <person name="Puehler A."/>
            <person name="Eichenlaub R."/>
            <person name="Kaiser O."/>
            <person name="Bartels D."/>
        </authorList>
    </citation>
    <scope>NUCLEOTIDE SEQUENCE [LARGE SCALE GENOMIC DNA]</scope>
    <source>
        <strain>NCPPB 382</strain>
    </source>
</reference>